<proteinExistence type="predicted"/>
<gene>
    <name type="ORF">DDB_G0288959</name>
</gene>
<organism>
    <name type="scientific">Dictyostelium discoideum</name>
    <name type="common">Social amoeba</name>
    <dbReference type="NCBI Taxonomy" id="44689"/>
    <lineage>
        <taxon>Eukaryota</taxon>
        <taxon>Amoebozoa</taxon>
        <taxon>Evosea</taxon>
        <taxon>Eumycetozoa</taxon>
        <taxon>Dictyostelia</taxon>
        <taxon>Dictyosteliales</taxon>
        <taxon>Dictyosteliaceae</taxon>
        <taxon>Dictyostelium</taxon>
    </lineage>
</organism>
<dbReference type="EMBL" id="AAFI02000126">
    <property type="protein sequence ID" value="EAL63003.1"/>
    <property type="status" value="ALT_SEQ"/>
    <property type="molecule type" value="Genomic_DNA"/>
</dbReference>
<dbReference type="RefSeq" id="XP_636496.1">
    <property type="nucleotide sequence ID" value="XM_631404.1"/>
</dbReference>
<dbReference type="FunCoup" id="Q54I83">
    <property type="interactions" value="435"/>
</dbReference>
<dbReference type="PaxDb" id="44689-DDB0219392"/>
<dbReference type="EnsemblProtists" id="EAL63003">
    <property type="protein sequence ID" value="EAL63003"/>
    <property type="gene ID" value="DDB_G0288959"/>
</dbReference>
<dbReference type="GeneID" id="8626879"/>
<dbReference type="KEGG" id="ddi:DDB_G0288959"/>
<dbReference type="dictyBase" id="DDB_G0288959"/>
<dbReference type="VEuPathDB" id="AmoebaDB:DDB_G0288959"/>
<dbReference type="eggNOG" id="ENOG502RHA6">
    <property type="taxonomic scope" value="Eukaryota"/>
</dbReference>
<dbReference type="InParanoid" id="Q54I83"/>
<dbReference type="PRO" id="PR:Q54I83"/>
<dbReference type="Proteomes" id="UP000002195">
    <property type="component" value="Chromosome 5"/>
</dbReference>
<dbReference type="PANTHER" id="PTHR16148:SF14">
    <property type="entry name" value="MYND-TYPE DOMAIN-CONTAINING PROTEIN"/>
    <property type="match status" value="1"/>
</dbReference>
<dbReference type="PANTHER" id="PTHR16148">
    <property type="entry name" value="NF-KAPPA-B-REPRESSING FACTOR-RELATED"/>
    <property type="match status" value="1"/>
</dbReference>
<evidence type="ECO:0000256" key="1">
    <source>
        <dbReference type="SAM" id="MobiDB-lite"/>
    </source>
</evidence>
<evidence type="ECO:0000305" key="2"/>
<comment type="sequence caution" evidence="2">
    <conflict type="erroneous gene model prediction">
        <sequence resource="EMBL-CDS" id="EAL63003"/>
    </conflict>
</comment>
<accession>Q54I83</accession>
<protein>
    <recommendedName>
        <fullName>Putative uncharacterized protein DDB_G0288959</fullName>
    </recommendedName>
</protein>
<feature type="chain" id="PRO_0000346968" description="Putative uncharacterized protein DDB_G0288959">
    <location>
        <begin position="1"/>
        <end position="418"/>
    </location>
</feature>
<feature type="region of interest" description="Disordered" evidence="1">
    <location>
        <begin position="123"/>
        <end position="174"/>
    </location>
</feature>
<feature type="region of interest" description="Disordered" evidence="1">
    <location>
        <begin position="209"/>
        <end position="231"/>
    </location>
</feature>
<feature type="region of interest" description="Disordered" evidence="1">
    <location>
        <begin position="258"/>
        <end position="302"/>
    </location>
</feature>
<feature type="region of interest" description="Disordered" evidence="1">
    <location>
        <begin position="344"/>
        <end position="418"/>
    </location>
</feature>
<feature type="compositionally biased region" description="Basic and acidic residues" evidence="1">
    <location>
        <begin position="136"/>
        <end position="154"/>
    </location>
</feature>
<feature type="compositionally biased region" description="Acidic residues" evidence="1">
    <location>
        <begin position="156"/>
        <end position="170"/>
    </location>
</feature>
<feature type="compositionally biased region" description="Basic and acidic residues" evidence="1">
    <location>
        <begin position="209"/>
        <end position="227"/>
    </location>
</feature>
<feature type="compositionally biased region" description="Low complexity" evidence="1">
    <location>
        <begin position="266"/>
        <end position="293"/>
    </location>
</feature>
<feature type="compositionally biased region" description="Acidic residues" evidence="1">
    <location>
        <begin position="344"/>
        <end position="356"/>
    </location>
</feature>
<feature type="compositionally biased region" description="Polar residues" evidence="1">
    <location>
        <begin position="359"/>
        <end position="374"/>
    </location>
</feature>
<feature type="compositionally biased region" description="Low complexity" evidence="1">
    <location>
        <begin position="375"/>
        <end position="390"/>
    </location>
</feature>
<feature type="compositionally biased region" description="Basic residues" evidence="1">
    <location>
        <begin position="391"/>
        <end position="401"/>
    </location>
</feature>
<sequence length="418" mass="48147">MSQIFKERNHFYIRICEGYVLPLLLILHDHQYFNNIQFLELITVLQGIIRNHFKNGMGLRSTYIAPESASTSKPIYLSDIGFTIRFAPTYPRYSIMVKNIKPQENRNEPIKIKRKETIYIDNKVKDSINNSNNNNNKKDKKDKNKQNEEDHLIIDDVIDEEIQEKEDNESDSDKKKLITKITTTTTTTIPTSSPTNIIDDNVEVIETRFDKEEKEREKEKEKEKEKEEKEEDIDILNDRAIALAATQEYEDDDVIFIKDDNDNDKNQNQNQNQNNNNNNNNNNNNNNNNNNNNEGEEEDEELPYQGGMYKGLYVTGHTMIVETQIKVAGATTLISQFHVANEDKDADDSDDFDEFNLPDTESQLSKSKQKSPNVKKTTTTTTTSTSTSSRKQSKSKLKPKSKSTMATNNGGISLYFKK</sequence>
<reference key="1">
    <citation type="journal article" date="2005" name="Nature">
        <title>The genome of the social amoeba Dictyostelium discoideum.</title>
        <authorList>
            <person name="Eichinger L."/>
            <person name="Pachebat J.A."/>
            <person name="Gloeckner G."/>
            <person name="Rajandream M.A."/>
            <person name="Sucgang R."/>
            <person name="Berriman M."/>
            <person name="Song J."/>
            <person name="Olsen R."/>
            <person name="Szafranski K."/>
            <person name="Xu Q."/>
            <person name="Tunggal B."/>
            <person name="Kummerfeld S."/>
            <person name="Madera M."/>
            <person name="Konfortov B.A."/>
            <person name="Rivero F."/>
            <person name="Bankier A.T."/>
            <person name="Lehmann R."/>
            <person name="Hamlin N."/>
            <person name="Davies R."/>
            <person name="Gaudet P."/>
            <person name="Fey P."/>
            <person name="Pilcher K."/>
            <person name="Chen G."/>
            <person name="Saunders D."/>
            <person name="Sodergren E.J."/>
            <person name="Davis P."/>
            <person name="Kerhornou A."/>
            <person name="Nie X."/>
            <person name="Hall N."/>
            <person name="Anjard C."/>
            <person name="Hemphill L."/>
            <person name="Bason N."/>
            <person name="Farbrother P."/>
            <person name="Desany B."/>
            <person name="Just E."/>
            <person name="Morio T."/>
            <person name="Rost R."/>
            <person name="Churcher C.M."/>
            <person name="Cooper J."/>
            <person name="Haydock S."/>
            <person name="van Driessche N."/>
            <person name="Cronin A."/>
            <person name="Goodhead I."/>
            <person name="Muzny D.M."/>
            <person name="Mourier T."/>
            <person name="Pain A."/>
            <person name="Lu M."/>
            <person name="Harper D."/>
            <person name="Lindsay R."/>
            <person name="Hauser H."/>
            <person name="James K.D."/>
            <person name="Quiles M."/>
            <person name="Madan Babu M."/>
            <person name="Saito T."/>
            <person name="Buchrieser C."/>
            <person name="Wardroper A."/>
            <person name="Felder M."/>
            <person name="Thangavelu M."/>
            <person name="Johnson D."/>
            <person name="Knights A."/>
            <person name="Loulseged H."/>
            <person name="Mungall K.L."/>
            <person name="Oliver K."/>
            <person name="Price C."/>
            <person name="Quail M.A."/>
            <person name="Urushihara H."/>
            <person name="Hernandez J."/>
            <person name="Rabbinowitsch E."/>
            <person name="Steffen D."/>
            <person name="Sanders M."/>
            <person name="Ma J."/>
            <person name="Kohara Y."/>
            <person name="Sharp S."/>
            <person name="Simmonds M.N."/>
            <person name="Spiegler S."/>
            <person name="Tivey A."/>
            <person name="Sugano S."/>
            <person name="White B."/>
            <person name="Walker D."/>
            <person name="Woodward J.R."/>
            <person name="Winckler T."/>
            <person name="Tanaka Y."/>
            <person name="Shaulsky G."/>
            <person name="Schleicher M."/>
            <person name="Weinstock G.M."/>
            <person name="Rosenthal A."/>
            <person name="Cox E.C."/>
            <person name="Chisholm R.L."/>
            <person name="Gibbs R.A."/>
            <person name="Loomis W.F."/>
            <person name="Platzer M."/>
            <person name="Kay R.R."/>
            <person name="Williams J.G."/>
            <person name="Dear P.H."/>
            <person name="Noegel A.A."/>
            <person name="Barrell B.G."/>
            <person name="Kuspa A."/>
        </authorList>
    </citation>
    <scope>NUCLEOTIDE SEQUENCE [LARGE SCALE GENOMIC DNA]</scope>
    <source>
        <strain>AX4</strain>
    </source>
</reference>
<name>Y9392_DICDI</name>
<keyword id="KW-1185">Reference proteome</keyword>